<keyword id="KW-0068">Autocatalytic cleavage</keyword>
<keyword id="KW-0210">Decarboxylase</keyword>
<keyword id="KW-0456">Lyase</keyword>
<keyword id="KW-0620">Polyamine biosynthesis</keyword>
<keyword id="KW-0670">Pyruvate</keyword>
<keyword id="KW-1185">Reference proteome</keyword>
<keyword id="KW-0949">S-adenosyl-L-methionine</keyword>
<keyword id="KW-0704">Schiff base</keyword>
<keyword id="KW-0745">Spermidine biosynthesis</keyword>
<keyword id="KW-0865">Zymogen</keyword>
<comment type="function">
    <text evidence="1">Catalyzes the decarboxylation of S-adenosylmethionine to S-adenosylmethioninamine (dcAdoMet), the propylamine donor required for the synthesis of the polyamines spermine and spermidine from the diamine putrescine.</text>
</comment>
<comment type="catalytic activity">
    <reaction evidence="1">
        <text>S-adenosyl-L-methionine + H(+) = S-adenosyl 3-(methylsulfanyl)propylamine + CO2</text>
        <dbReference type="Rhea" id="RHEA:15981"/>
        <dbReference type="ChEBI" id="CHEBI:15378"/>
        <dbReference type="ChEBI" id="CHEBI:16526"/>
        <dbReference type="ChEBI" id="CHEBI:57443"/>
        <dbReference type="ChEBI" id="CHEBI:59789"/>
        <dbReference type="EC" id="4.1.1.50"/>
    </reaction>
</comment>
<comment type="cofactor">
    <cofactor evidence="1">
        <name>pyruvate</name>
        <dbReference type="ChEBI" id="CHEBI:15361"/>
    </cofactor>
    <text evidence="1">Binds 1 pyruvoyl group covalently per subunit.</text>
</comment>
<comment type="pathway">
    <text evidence="1">Amine and polyamine biosynthesis; S-adenosylmethioninamine biosynthesis; S-adenosylmethioninamine from S-adenosyl-L-methionine: step 1/1.</text>
</comment>
<comment type="subunit">
    <text evidence="1">Heterotetramer of two alpha and two beta chains arranged as a dimer of alpha/beta heterodimers.</text>
</comment>
<comment type="PTM">
    <text evidence="1">Is synthesized initially as an inactive proenzyme. Formation of the active enzyme involves a self-maturation process in which the active site pyruvoyl group is generated from an internal serine residue via an autocatalytic post-translational modification. Two non-identical subunits are generated from the proenzyme in this reaction, and the pyruvate is formed at the N-terminus of the alpha chain, which is derived from the carboxyl end of the proenzyme. The post-translation cleavage follows an unusual pathway, termed non-hydrolytic serinolysis, in which the side chain hydroxyl group of the serine supplies its oxygen atom to form the C-terminus of the beta chain, while the remainder of the serine residue undergoes an oxidative deamination to produce ammonia and the pyruvoyl group blocking the N-terminus of the alpha chain.</text>
</comment>
<comment type="similarity">
    <text evidence="1">Belongs to the prokaryotic AdoMetDC family. Type 1 subfamily.</text>
</comment>
<reference key="1">
    <citation type="journal article" date="2007" name="Genome Biol.">
        <title>Genome analysis and genome-wide proteomics of Thermococcus gammatolerans, the most radioresistant organism known amongst the Archaea.</title>
        <authorList>
            <person name="Zivanovic Y."/>
            <person name="Armengaud J."/>
            <person name="Lagorce A."/>
            <person name="Leplat C."/>
            <person name="Guerin P."/>
            <person name="Dutertre M."/>
            <person name="Anthouard V."/>
            <person name="Forterre P."/>
            <person name="Wincker P."/>
            <person name="Confalonieri F."/>
        </authorList>
    </citation>
    <scope>NUCLEOTIDE SEQUENCE [LARGE SCALE GENOMIC DNA]</scope>
    <source>
        <strain>DSM 15229 / JCM 11827 / EJ3</strain>
    </source>
</reference>
<accession>C5A3H2</accession>
<name>SPEH_THEGJ</name>
<evidence type="ECO:0000255" key="1">
    <source>
        <dbReference type="HAMAP-Rule" id="MF_00464"/>
    </source>
</evidence>
<protein>
    <recommendedName>
        <fullName evidence="1">S-adenosylmethionine decarboxylase proenzyme</fullName>
        <shortName evidence="1">AdoMetDC</shortName>
        <shortName evidence="1">SAMDC</shortName>
        <ecNumber evidence="1">4.1.1.50</ecNumber>
    </recommendedName>
    <component>
        <recommendedName>
            <fullName evidence="1">S-adenosylmethionine decarboxylase beta chain</fullName>
        </recommendedName>
    </component>
    <component>
        <recommendedName>
            <fullName evidence="1">S-adenosylmethionine decarboxylase alpha chain</fullName>
        </recommendedName>
    </component>
</protein>
<organism>
    <name type="scientific">Thermococcus gammatolerans (strain DSM 15229 / JCM 11827 / EJ3)</name>
    <dbReference type="NCBI Taxonomy" id="593117"/>
    <lineage>
        <taxon>Archaea</taxon>
        <taxon>Methanobacteriati</taxon>
        <taxon>Methanobacteriota</taxon>
        <taxon>Thermococci</taxon>
        <taxon>Thermococcales</taxon>
        <taxon>Thermococcaceae</taxon>
        <taxon>Thermococcus</taxon>
    </lineage>
</organism>
<gene>
    <name evidence="1" type="primary">speH</name>
    <name type="ordered locus">TGAM_0282</name>
</gene>
<feature type="chain" id="PRO_1000206320" description="S-adenosylmethionine decarboxylase beta chain" evidence="1">
    <location>
        <begin position="1"/>
        <end position="65"/>
    </location>
</feature>
<feature type="chain" id="PRO_1000206321" description="S-adenosylmethionine decarboxylase alpha chain" evidence="1">
    <location>
        <begin position="66"/>
        <end position="143"/>
    </location>
</feature>
<feature type="active site" description="Schiff-base intermediate with substrate; via pyruvic acid" evidence="1">
    <location>
        <position position="66"/>
    </location>
</feature>
<feature type="active site" description="Proton acceptor; for processing activity" evidence="1">
    <location>
        <position position="71"/>
    </location>
</feature>
<feature type="active site" description="Proton donor; for catalytic activity" evidence="1">
    <location>
        <position position="86"/>
    </location>
</feature>
<feature type="site" description="Cleavage (non-hydrolytic); by autolysis" evidence="1">
    <location>
        <begin position="65"/>
        <end position="66"/>
    </location>
</feature>
<feature type="modified residue" description="Pyruvic acid (Ser); by autocatalysis" evidence="1">
    <location>
        <position position="66"/>
    </location>
</feature>
<proteinExistence type="inferred from homology"/>
<sequence>MSEIETIGFHYVVEAAGCDPEILGNADRIREIFLEAAKVGNMEVKSSYFFKFSPTGVSGVVIVAESHISVHTWPEKGYAALDVYTCGTKAEPEKAVDYILEKFRAKYAHVSEIKRGIEEDDDTFTHMIMTWEESLRKNGNGKG</sequence>
<dbReference type="EC" id="4.1.1.50" evidence="1"/>
<dbReference type="EMBL" id="CP001398">
    <property type="protein sequence ID" value="ACS32784.1"/>
    <property type="molecule type" value="Genomic_DNA"/>
</dbReference>
<dbReference type="SMR" id="C5A3H2"/>
<dbReference type="STRING" id="593117.TGAM_0282"/>
<dbReference type="PaxDb" id="593117-TGAM_0282"/>
<dbReference type="KEGG" id="tga:TGAM_0282"/>
<dbReference type="PATRIC" id="fig|593117.10.peg.285"/>
<dbReference type="eggNOG" id="arCOG00279">
    <property type="taxonomic scope" value="Archaea"/>
</dbReference>
<dbReference type="HOGENOM" id="CLU_125470_2_2_2"/>
<dbReference type="UniPathway" id="UPA00331">
    <property type="reaction ID" value="UER00451"/>
</dbReference>
<dbReference type="Proteomes" id="UP000001488">
    <property type="component" value="Chromosome"/>
</dbReference>
<dbReference type="GO" id="GO:0005829">
    <property type="term" value="C:cytosol"/>
    <property type="evidence" value="ECO:0007669"/>
    <property type="project" value="TreeGrafter"/>
</dbReference>
<dbReference type="GO" id="GO:0004014">
    <property type="term" value="F:adenosylmethionine decarboxylase activity"/>
    <property type="evidence" value="ECO:0007669"/>
    <property type="project" value="UniProtKB-UniRule"/>
</dbReference>
<dbReference type="GO" id="GO:0008295">
    <property type="term" value="P:spermidine biosynthetic process"/>
    <property type="evidence" value="ECO:0007669"/>
    <property type="project" value="UniProtKB-UniRule"/>
</dbReference>
<dbReference type="FunFam" id="3.30.360.110:FF:000001">
    <property type="entry name" value="S-adenosylmethionine decarboxylase proenzyme"/>
    <property type="match status" value="1"/>
</dbReference>
<dbReference type="Gene3D" id="3.30.160.750">
    <property type="match status" value="1"/>
</dbReference>
<dbReference type="Gene3D" id="3.30.360.110">
    <property type="entry name" value="S-adenosylmethionine decarboxylase domain"/>
    <property type="match status" value="1"/>
</dbReference>
<dbReference type="HAMAP" id="MF_00464">
    <property type="entry name" value="AdoMetDC_1"/>
    <property type="match status" value="1"/>
</dbReference>
<dbReference type="InterPro" id="IPR042286">
    <property type="entry name" value="AdoMetDC_C"/>
</dbReference>
<dbReference type="InterPro" id="IPR003826">
    <property type="entry name" value="AdoMetDC_fam_prok"/>
</dbReference>
<dbReference type="InterPro" id="IPR042284">
    <property type="entry name" value="AdoMetDC_N"/>
</dbReference>
<dbReference type="InterPro" id="IPR016067">
    <property type="entry name" value="S-AdoMet_deCO2ase_core"/>
</dbReference>
<dbReference type="InterPro" id="IPR017716">
    <property type="entry name" value="S-AdoMet_deCOase_pro-enz"/>
</dbReference>
<dbReference type="NCBIfam" id="TIGR03330">
    <property type="entry name" value="SAM_DCase_Bsu"/>
    <property type="match status" value="1"/>
</dbReference>
<dbReference type="PANTHER" id="PTHR33866">
    <property type="entry name" value="S-ADENOSYLMETHIONINE DECARBOXYLASE PROENZYME"/>
    <property type="match status" value="1"/>
</dbReference>
<dbReference type="PANTHER" id="PTHR33866:SF2">
    <property type="entry name" value="S-ADENOSYLMETHIONINE DECARBOXYLASE PROENZYME"/>
    <property type="match status" value="1"/>
</dbReference>
<dbReference type="Pfam" id="PF02675">
    <property type="entry name" value="AdoMet_dc"/>
    <property type="match status" value="1"/>
</dbReference>
<dbReference type="SUPFAM" id="SSF56276">
    <property type="entry name" value="S-adenosylmethionine decarboxylase"/>
    <property type="match status" value="1"/>
</dbReference>